<name>AATD_METVS</name>
<comment type="function">
    <text evidence="1">Component of the A-type ATP synthase that produces ATP from ADP in the presence of a proton gradient across the membrane.</text>
</comment>
<comment type="subunit">
    <text evidence="1">Has multiple subunits with at least A(3), B(3), C, D, E, F, H, I and proteolipid K(x).</text>
</comment>
<comment type="subcellular location">
    <subcellularLocation>
        <location evidence="1">Cell membrane</location>
        <topology evidence="1">Peripheral membrane protein</topology>
    </subcellularLocation>
</comment>
<comment type="similarity">
    <text evidence="1">Belongs to the V-ATPase D subunit family.</text>
</comment>
<accession>A6UP56</accession>
<protein>
    <recommendedName>
        <fullName evidence="1">A-type ATP synthase subunit D</fullName>
    </recommendedName>
</protein>
<evidence type="ECO:0000255" key="1">
    <source>
        <dbReference type="HAMAP-Rule" id="MF_00271"/>
    </source>
</evidence>
<sequence length="214" mass="24415">MADVNPTRMELLKLKSKIKLAEKGHKLLKQKRDALMMEFFEILNQASGIRDKVNVALSKAYKDLIMAQALMGTLSVKEASFAAKNDTIELDVDMRNIMGIGVPVFELQNVKRDISNRGYSPYGVSSKLDEAAKNFEEALELISELAEIETSIKLLAQEIITTKRRVNALEYVVIPRMNETKKYIGMRLDEMERENFFRLKLIKARIDAREAEEA</sequence>
<keyword id="KW-0066">ATP synthesis</keyword>
<keyword id="KW-1003">Cell membrane</keyword>
<keyword id="KW-0375">Hydrogen ion transport</keyword>
<keyword id="KW-0406">Ion transport</keyword>
<keyword id="KW-0472">Membrane</keyword>
<keyword id="KW-0813">Transport</keyword>
<feature type="chain" id="PRO_1000059169" description="A-type ATP synthase subunit D">
    <location>
        <begin position="1"/>
        <end position="214"/>
    </location>
</feature>
<proteinExistence type="inferred from homology"/>
<dbReference type="EMBL" id="CP000742">
    <property type="protein sequence ID" value="ABR54278.1"/>
    <property type="molecule type" value="Genomic_DNA"/>
</dbReference>
<dbReference type="RefSeq" id="WP_011972181.1">
    <property type="nucleotide sequence ID" value="NC_009634.1"/>
</dbReference>
<dbReference type="SMR" id="A6UP56"/>
<dbReference type="STRING" id="406327.Mevan_0369"/>
<dbReference type="GeneID" id="5325781"/>
<dbReference type="KEGG" id="mvn:Mevan_0369"/>
<dbReference type="eggNOG" id="arCOG04101">
    <property type="taxonomic scope" value="Archaea"/>
</dbReference>
<dbReference type="HOGENOM" id="CLU_069688_2_1_2"/>
<dbReference type="OrthoDB" id="117390at2157"/>
<dbReference type="Proteomes" id="UP000001107">
    <property type="component" value="Chromosome"/>
</dbReference>
<dbReference type="GO" id="GO:0005886">
    <property type="term" value="C:plasma membrane"/>
    <property type="evidence" value="ECO:0007669"/>
    <property type="project" value="UniProtKB-SubCell"/>
</dbReference>
<dbReference type="GO" id="GO:0005524">
    <property type="term" value="F:ATP binding"/>
    <property type="evidence" value="ECO:0007669"/>
    <property type="project" value="UniProtKB-UniRule"/>
</dbReference>
<dbReference type="GO" id="GO:0046933">
    <property type="term" value="F:proton-transporting ATP synthase activity, rotational mechanism"/>
    <property type="evidence" value="ECO:0007669"/>
    <property type="project" value="UniProtKB-UniRule"/>
</dbReference>
<dbReference type="GO" id="GO:0046961">
    <property type="term" value="F:proton-transporting ATPase activity, rotational mechanism"/>
    <property type="evidence" value="ECO:0007669"/>
    <property type="project" value="InterPro"/>
</dbReference>
<dbReference type="GO" id="GO:0042777">
    <property type="term" value="P:proton motive force-driven plasma membrane ATP synthesis"/>
    <property type="evidence" value="ECO:0007669"/>
    <property type="project" value="UniProtKB-UniRule"/>
</dbReference>
<dbReference type="FunFam" id="1.10.287.3240:FF:000007">
    <property type="entry name" value="V-type ATP synthase subunit D"/>
    <property type="match status" value="1"/>
</dbReference>
<dbReference type="Gene3D" id="1.10.287.3240">
    <property type="match status" value="1"/>
</dbReference>
<dbReference type="HAMAP" id="MF_00271">
    <property type="entry name" value="ATP_synth_D_arch"/>
    <property type="match status" value="1"/>
</dbReference>
<dbReference type="InterPro" id="IPR002699">
    <property type="entry name" value="V_ATPase_D"/>
</dbReference>
<dbReference type="NCBIfam" id="NF001545">
    <property type="entry name" value="PRK00373.1-4"/>
    <property type="match status" value="1"/>
</dbReference>
<dbReference type="NCBIfam" id="TIGR00309">
    <property type="entry name" value="V_ATPase_subD"/>
    <property type="match status" value="1"/>
</dbReference>
<dbReference type="PANTHER" id="PTHR11671">
    <property type="entry name" value="V-TYPE ATP SYNTHASE SUBUNIT D"/>
    <property type="match status" value="1"/>
</dbReference>
<dbReference type="Pfam" id="PF01813">
    <property type="entry name" value="ATP-synt_D"/>
    <property type="match status" value="1"/>
</dbReference>
<reference key="1">
    <citation type="submission" date="2007-06" db="EMBL/GenBank/DDBJ databases">
        <title>Complete sequence of Methanococcus vannielii SB.</title>
        <authorList>
            <consortium name="US DOE Joint Genome Institute"/>
            <person name="Copeland A."/>
            <person name="Lucas S."/>
            <person name="Lapidus A."/>
            <person name="Barry K."/>
            <person name="Glavina del Rio T."/>
            <person name="Dalin E."/>
            <person name="Tice H."/>
            <person name="Pitluck S."/>
            <person name="Chain P."/>
            <person name="Malfatti S."/>
            <person name="Shin M."/>
            <person name="Vergez L."/>
            <person name="Schmutz J."/>
            <person name="Larimer F."/>
            <person name="Land M."/>
            <person name="Hauser L."/>
            <person name="Kyrpides N."/>
            <person name="Anderson I."/>
            <person name="Sieprawska-Lupa M."/>
            <person name="Whitman W.B."/>
            <person name="Richardson P."/>
        </authorList>
    </citation>
    <scope>NUCLEOTIDE SEQUENCE [LARGE SCALE GENOMIC DNA]</scope>
    <source>
        <strain>ATCC 35089 / DSM 1224 / JCM 13029 / OCM 148 / SB</strain>
    </source>
</reference>
<gene>
    <name evidence="1" type="primary">atpD</name>
    <name type="ordered locus">Mevan_0369</name>
</gene>
<organism>
    <name type="scientific">Methanococcus vannielii (strain ATCC 35089 / DSM 1224 / JCM 13029 / OCM 148 / SB)</name>
    <dbReference type="NCBI Taxonomy" id="406327"/>
    <lineage>
        <taxon>Archaea</taxon>
        <taxon>Methanobacteriati</taxon>
        <taxon>Methanobacteriota</taxon>
        <taxon>Methanomada group</taxon>
        <taxon>Methanococci</taxon>
        <taxon>Methanococcales</taxon>
        <taxon>Methanococcaceae</taxon>
        <taxon>Methanococcus</taxon>
    </lineage>
</organism>